<accession>Q08B29</accession>
<evidence type="ECO:0000250" key="1"/>
<evidence type="ECO:0000255" key="2"/>
<evidence type="ECO:0000305" key="3"/>
<keyword id="KW-1003">Cell membrane</keyword>
<keyword id="KW-0406">Ion transport</keyword>
<keyword id="KW-0472">Membrane</keyword>
<keyword id="KW-1185">Reference proteome</keyword>
<keyword id="KW-0812">Transmembrane</keyword>
<keyword id="KW-1133">Transmembrane helix</keyword>
<keyword id="KW-0813">Transport</keyword>
<gene>
    <name type="primary">mfsd5</name>
</gene>
<comment type="function">
    <text evidence="1">Mediates high-affinity intracellular uptake of the rare oligo-element molybdenum.</text>
</comment>
<comment type="subcellular location">
    <subcellularLocation>
        <location evidence="1">Cell membrane</location>
        <topology evidence="1">Multi-pass membrane protein</topology>
    </subcellularLocation>
</comment>
<comment type="similarity">
    <text evidence="3">Belongs to the major facilitator superfamily.</text>
</comment>
<reference key="1">
    <citation type="submission" date="2006-10" db="EMBL/GenBank/DDBJ databases">
        <authorList>
            <consortium name="NIH - Xenopus Gene Collection (XGC) project"/>
        </authorList>
    </citation>
    <scope>NUCLEOTIDE SEQUENCE [LARGE SCALE MRNA]</scope>
    <source>
        <tissue>Embryo</tissue>
    </source>
</reference>
<proteinExistence type="evidence at transcript level"/>
<sequence>MLVTAYLFLLGLLALWGVLEFSACHSKPSASSNALGNPAFRQFQYDFYRTYFPALAADWLQGPYLYKLYQHYHFLEGQIAIIYVCGFGASVFAGLVSVPLTSRLGRRKSCILFCLLLSASYLCKLSQEYFVLMTGRVLGGFSSSLLFSCFEAWYTHEHAEQHDFPAEWLPHTFTRAAAWNGGIAIAAGITANVCAEWLGLGPASPSVLAVPLLVLSVVLVIREWDENYGQTSSFRRVCGDGLRCLLRDRRVLLLGTIQALFESVVYIFIFLWTPVLDPHNAPLGIAFSSFMAASAVGSSLYHLATSKKYHLQPMHVLCLSILMVFFSLFMLTFSTAPGQEHPTESLLAFLLIELACGLYFPAMRFLRRRLIPEKEQTGVLNWFRVPLNLLAGLGLLVLHDSDYQSGTRNMFSLCAVTMLLALLCVVSLFTMVRNDSELRLPASEPEPNGTE</sequence>
<name>MFSD5_XENLA</name>
<dbReference type="EMBL" id="BC124899">
    <property type="protein sequence ID" value="AAI24900.1"/>
    <property type="molecule type" value="mRNA"/>
</dbReference>
<dbReference type="RefSeq" id="NP_001121281.1">
    <property type="nucleotide sequence ID" value="NM_001127809.1"/>
</dbReference>
<dbReference type="SMR" id="Q08B29"/>
<dbReference type="DNASU" id="100158364"/>
<dbReference type="GeneID" id="100158364"/>
<dbReference type="KEGG" id="xla:100158364"/>
<dbReference type="AGR" id="Xenbase:XB-GENE-967136"/>
<dbReference type="CTD" id="100158364"/>
<dbReference type="Xenbase" id="XB-GENE-967136">
    <property type="gene designation" value="mfsd5.S"/>
</dbReference>
<dbReference type="OrthoDB" id="263957at2759"/>
<dbReference type="Proteomes" id="UP000186698">
    <property type="component" value="Chromosome 2S"/>
</dbReference>
<dbReference type="Bgee" id="100158364">
    <property type="expression patterns" value="Expressed in blastula and 19 other cell types or tissues"/>
</dbReference>
<dbReference type="GO" id="GO:0005886">
    <property type="term" value="C:plasma membrane"/>
    <property type="evidence" value="ECO:0007669"/>
    <property type="project" value="UniProtKB-SubCell"/>
</dbReference>
<dbReference type="GO" id="GO:0015098">
    <property type="term" value="F:molybdate ion transmembrane transporter activity"/>
    <property type="evidence" value="ECO:0007669"/>
    <property type="project" value="InterPro"/>
</dbReference>
<dbReference type="GO" id="GO:0006811">
    <property type="term" value="P:monoatomic ion transport"/>
    <property type="evidence" value="ECO:0007669"/>
    <property type="project" value="UniProtKB-KW"/>
</dbReference>
<dbReference type="CDD" id="cd17487">
    <property type="entry name" value="MFS_MFSD5_like"/>
    <property type="match status" value="1"/>
</dbReference>
<dbReference type="Gene3D" id="1.20.1250.20">
    <property type="entry name" value="MFS general substrate transporter like domains"/>
    <property type="match status" value="1"/>
</dbReference>
<dbReference type="InterPro" id="IPR036259">
    <property type="entry name" value="MFS_trans_sf"/>
</dbReference>
<dbReference type="InterPro" id="IPR008509">
    <property type="entry name" value="MOT2/MFSD5"/>
</dbReference>
<dbReference type="PANTHER" id="PTHR23516:SF1">
    <property type="entry name" value="MOLYBDATE-ANION TRANSPORTER"/>
    <property type="match status" value="1"/>
</dbReference>
<dbReference type="PANTHER" id="PTHR23516">
    <property type="entry name" value="SAM (S-ADENOSYL METHIONINE) TRANSPORTER"/>
    <property type="match status" value="1"/>
</dbReference>
<dbReference type="Pfam" id="PF05631">
    <property type="entry name" value="MFS_5"/>
    <property type="match status" value="1"/>
</dbReference>
<dbReference type="SUPFAM" id="SSF103473">
    <property type="entry name" value="MFS general substrate transporter"/>
    <property type="match status" value="1"/>
</dbReference>
<feature type="chain" id="PRO_0000273406" description="Molybdate-anion transporter">
    <location>
        <begin position="1"/>
        <end position="451"/>
    </location>
</feature>
<feature type="transmembrane region" description="Helical" evidence="2">
    <location>
        <begin position="1"/>
        <end position="21"/>
    </location>
</feature>
<feature type="transmembrane region" description="Helical" evidence="2">
    <location>
        <begin position="45"/>
        <end position="65"/>
    </location>
</feature>
<feature type="transmembrane region" description="Helical" evidence="2">
    <location>
        <begin position="79"/>
        <end position="99"/>
    </location>
</feature>
<feature type="transmembrane region" description="Helical" evidence="2">
    <location>
        <begin position="130"/>
        <end position="150"/>
    </location>
</feature>
<feature type="transmembrane region" description="Helical" evidence="2">
    <location>
        <begin position="180"/>
        <end position="200"/>
    </location>
</feature>
<feature type="transmembrane region" description="Helical" evidence="2">
    <location>
        <begin position="201"/>
        <end position="221"/>
    </location>
</feature>
<feature type="transmembrane region" description="Helical" evidence="2">
    <location>
        <begin position="251"/>
        <end position="271"/>
    </location>
</feature>
<feature type="transmembrane region" description="Helical" evidence="2">
    <location>
        <begin position="281"/>
        <end position="301"/>
    </location>
</feature>
<feature type="transmembrane region" description="Helical" evidence="2">
    <location>
        <begin position="316"/>
        <end position="336"/>
    </location>
</feature>
<feature type="transmembrane region" description="Helical" evidence="2">
    <location>
        <begin position="346"/>
        <end position="366"/>
    </location>
</feature>
<feature type="transmembrane region" description="Helical" evidence="2">
    <location>
        <begin position="378"/>
        <end position="398"/>
    </location>
</feature>
<feature type="transmembrane region" description="Helical" evidence="2">
    <location>
        <begin position="410"/>
        <end position="430"/>
    </location>
</feature>
<organism>
    <name type="scientific">Xenopus laevis</name>
    <name type="common">African clawed frog</name>
    <dbReference type="NCBI Taxonomy" id="8355"/>
    <lineage>
        <taxon>Eukaryota</taxon>
        <taxon>Metazoa</taxon>
        <taxon>Chordata</taxon>
        <taxon>Craniata</taxon>
        <taxon>Vertebrata</taxon>
        <taxon>Euteleostomi</taxon>
        <taxon>Amphibia</taxon>
        <taxon>Batrachia</taxon>
        <taxon>Anura</taxon>
        <taxon>Pipoidea</taxon>
        <taxon>Pipidae</taxon>
        <taxon>Xenopodinae</taxon>
        <taxon>Xenopus</taxon>
        <taxon>Xenopus</taxon>
    </lineage>
</organism>
<protein>
    <recommendedName>
        <fullName>Molybdate-anion transporter</fullName>
    </recommendedName>
    <alternativeName>
        <fullName>Major facilitator superfamily domain-containing protein 5</fullName>
    </alternativeName>
    <alternativeName>
        <fullName>Molybdate transporter 2 homolog</fullName>
    </alternativeName>
</protein>